<proteinExistence type="inferred from homology"/>
<accession>Q7NAD1</accession>
<reference key="1">
    <citation type="journal article" date="2003" name="Nat. Biotechnol.">
        <title>The genome sequence of the entomopathogenic bacterium Photorhabdus luminescens.</title>
        <authorList>
            <person name="Duchaud E."/>
            <person name="Rusniok C."/>
            <person name="Frangeul L."/>
            <person name="Buchrieser C."/>
            <person name="Givaudan A."/>
            <person name="Taourit S."/>
            <person name="Bocs S."/>
            <person name="Boursaux-Eude C."/>
            <person name="Chandler M."/>
            <person name="Charles J.-F."/>
            <person name="Dassa E."/>
            <person name="Derose R."/>
            <person name="Derzelle S."/>
            <person name="Freyssinet G."/>
            <person name="Gaudriault S."/>
            <person name="Medigue C."/>
            <person name="Lanois A."/>
            <person name="Powell K."/>
            <person name="Siguier P."/>
            <person name="Vincent R."/>
            <person name="Wingate V."/>
            <person name="Zouine M."/>
            <person name="Glaser P."/>
            <person name="Boemare N."/>
            <person name="Danchin A."/>
            <person name="Kunst F."/>
        </authorList>
    </citation>
    <scope>NUCLEOTIDE SEQUENCE [LARGE SCALE GENOMIC DNA]</scope>
    <source>
        <strain>DSM 15139 / CIP 105565 / TT01</strain>
    </source>
</reference>
<dbReference type="EMBL" id="BX571859">
    <property type="protein sequence ID" value="CAE12298.1"/>
    <property type="molecule type" value="Genomic_DNA"/>
</dbReference>
<dbReference type="RefSeq" id="WP_011144416.1">
    <property type="nucleotide sequence ID" value="NC_005126.1"/>
</dbReference>
<dbReference type="SMR" id="Q7NAD1"/>
<dbReference type="STRING" id="243265.plu0003"/>
<dbReference type="GeneID" id="48846304"/>
<dbReference type="KEGG" id="plu:plu0003"/>
<dbReference type="eggNOG" id="COG1195">
    <property type="taxonomic scope" value="Bacteria"/>
</dbReference>
<dbReference type="HOGENOM" id="CLU_040267_0_0_6"/>
<dbReference type="OrthoDB" id="9803889at2"/>
<dbReference type="Proteomes" id="UP000002514">
    <property type="component" value="Chromosome"/>
</dbReference>
<dbReference type="GO" id="GO:0005737">
    <property type="term" value="C:cytoplasm"/>
    <property type="evidence" value="ECO:0007669"/>
    <property type="project" value="UniProtKB-SubCell"/>
</dbReference>
<dbReference type="GO" id="GO:0005524">
    <property type="term" value="F:ATP binding"/>
    <property type="evidence" value="ECO:0007669"/>
    <property type="project" value="UniProtKB-UniRule"/>
</dbReference>
<dbReference type="GO" id="GO:0003697">
    <property type="term" value="F:single-stranded DNA binding"/>
    <property type="evidence" value="ECO:0007669"/>
    <property type="project" value="UniProtKB-UniRule"/>
</dbReference>
<dbReference type="GO" id="GO:0006260">
    <property type="term" value="P:DNA replication"/>
    <property type="evidence" value="ECO:0007669"/>
    <property type="project" value="UniProtKB-UniRule"/>
</dbReference>
<dbReference type="GO" id="GO:0000731">
    <property type="term" value="P:DNA synthesis involved in DNA repair"/>
    <property type="evidence" value="ECO:0007669"/>
    <property type="project" value="TreeGrafter"/>
</dbReference>
<dbReference type="GO" id="GO:0006302">
    <property type="term" value="P:double-strand break repair"/>
    <property type="evidence" value="ECO:0007669"/>
    <property type="project" value="TreeGrafter"/>
</dbReference>
<dbReference type="GO" id="GO:0009432">
    <property type="term" value="P:SOS response"/>
    <property type="evidence" value="ECO:0007669"/>
    <property type="project" value="UniProtKB-UniRule"/>
</dbReference>
<dbReference type="FunFam" id="1.20.1050.90:FF:000001">
    <property type="entry name" value="DNA replication and repair protein RecF"/>
    <property type="match status" value="1"/>
</dbReference>
<dbReference type="Gene3D" id="3.40.50.300">
    <property type="entry name" value="P-loop containing nucleotide triphosphate hydrolases"/>
    <property type="match status" value="1"/>
</dbReference>
<dbReference type="Gene3D" id="1.20.1050.90">
    <property type="entry name" value="RecF/RecN/SMC, N-terminal domain"/>
    <property type="match status" value="1"/>
</dbReference>
<dbReference type="HAMAP" id="MF_00365">
    <property type="entry name" value="RecF"/>
    <property type="match status" value="1"/>
</dbReference>
<dbReference type="InterPro" id="IPR001238">
    <property type="entry name" value="DNA-binding_RecF"/>
</dbReference>
<dbReference type="InterPro" id="IPR018078">
    <property type="entry name" value="DNA-binding_RecF_CS"/>
</dbReference>
<dbReference type="InterPro" id="IPR027417">
    <property type="entry name" value="P-loop_NTPase"/>
</dbReference>
<dbReference type="InterPro" id="IPR003395">
    <property type="entry name" value="RecF/RecN/SMC_N"/>
</dbReference>
<dbReference type="InterPro" id="IPR042174">
    <property type="entry name" value="RecF_2"/>
</dbReference>
<dbReference type="NCBIfam" id="TIGR00611">
    <property type="entry name" value="recf"/>
    <property type="match status" value="1"/>
</dbReference>
<dbReference type="PANTHER" id="PTHR32182">
    <property type="entry name" value="DNA REPLICATION AND REPAIR PROTEIN RECF"/>
    <property type="match status" value="1"/>
</dbReference>
<dbReference type="PANTHER" id="PTHR32182:SF0">
    <property type="entry name" value="DNA REPLICATION AND REPAIR PROTEIN RECF"/>
    <property type="match status" value="1"/>
</dbReference>
<dbReference type="Pfam" id="PF02463">
    <property type="entry name" value="SMC_N"/>
    <property type="match status" value="1"/>
</dbReference>
<dbReference type="SUPFAM" id="SSF52540">
    <property type="entry name" value="P-loop containing nucleoside triphosphate hydrolases"/>
    <property type="match status" value="1"/>
</dbReference>
<dbReference type="PROSITE" id="PS00617">
    <property type="entry name" value="RECF_1"/>
    <property type="match status" value="1"/>
</dbReference>
<dbReference type="PROSITE" id="PS00618">
    <property type="entry name" value="RECF_2"/>
    <property type="match status" value="1"/>
</dbReference>
<organism>
    <name type="scientific">Photorhabdus laumondii subsp. laumondii (strain DSM 15139 / CIP 105565 / TT01)</name>
    <name type="common">Photorhabdus luminescens subsp. laumondii</name>
    <dbReference type="NCBI Taxonomy" id="243265"/>
    <lineage>
        <taxon>Bacteria</taxon>
        <taxon>Pseudomonadati</taxon>
        <taxon>Pseudomonadota</taxon>
        <taxon>Gammaproteobacteria</taxon>
        <taxon>Enterobacterales</taxon>
        <taxon>Morganellaceae</taxon>
        <taxon>Photorhabdus</taxon>
    </lineage>
</organism>
<evidence type="ECO:0000255" key="1">
    <source>
        <dbReference type="HAMAP-Rule" id="MF_00365"/>
    </source>
</evidence>
<sequence>MTLTRLLIRDFRNIAAADLPLATGFNFLVGSNGSGKTSVLEAIYTLGHGRSFRSIQAGRVILHGCDEFVLHGRLGQQENERERSIGLSKNRNGDSKVRIDGSDGGKIAELAKMLPMQLITPEGFTLLNGGPKYRRAFIDWGCFHNEPRFFSAWVNLKRLLKQRNAALRQVTRYSQIRPWDQELIPLANQINQWRGEYVTNITQDITNTCKQFLPEFTLSFSFQQGWDKESDYAELLERQFERDRTLTYTASGPHKADLRIRAEGTPVEDMLSRGQLKLLMCALRLAQGEYFTRQSGQQCLYLLDDFASELDTSRRQLLAARLKSTQAQVFVSAINPDQITDMLDGNSKMFRVENGKIEVQPQD</sequence>
<feature type="chain" id="PRO_0000196439" description="DNA replication and repair protein RecF">
    <location>
        <begin position="1"/>
        <end position="363"/>
    </location>
</feature>
<feature type="binding site" evidence="1">
    <location>
        <begin position="30"/>
        <end position="37"/>
    </location>
    <ligand>
        <name>ATP</name>
        <dbReference type="ChEBI" id="CHEBI:30616"/>
    </ligand>
</feature>
<protein>
    <recommendedName>
        <fullName evidence="1">DNA replication and repair protein RecF</fullName>
    </recommendedName>
</protein>
<name>RECF_PHOLL</name>
<gene>
    <name evidence="1" type="primary">recF</name>
    <name type="ordered locus">plu0003</name>
</gene>
<keyword id="KW-0067">ATP-binding</keyword>
<keyword id="KW-0963">Cytoplasm</keyword>
<keyword id="KW-0227">DNA damage</keyword>
<keyword id="KW-0234">DNA repair</keyword>
<keyword id="KW-0235">DNA replication</keyword>
<keyword id="KW-0238">DNA-binding</keyword>
<keyword id="KW-0547">Nucleotide-binding</keyword>
<keyword id="KW-1185">Reference proteome</keyword>
<keyword id="KW-0742">SOS response</keyword>
<comment type="function">
    <text evidence="1">The RecF protein is involved in DNA metabolism; it is required for DNA replication and normal SOS inducibility. RecF binds preferentially to single-stranded, linear DNA. It also seems to bind ATP.</text>
</comment>
<comment type="subcellular location">
    <subcellularLocation>
        <location evidence="1">Cytoplasm</location>
    </subcellularLocation>
</comment>
<comment type="similarity">
    <text evidence="1">Belongs to the RecF family.</text>
</comment>